<gene>
    <name evidence="1" type="primary">cbiX</name>
    <name type="ordered locus">LS215_1822</name>
</gene>
<reference key="1">
    <citation type="journal article" date="2009" name="Proc. Natl. Acad. Sci. U.S.A.">
        <title>Biogeography of the Sulfolobus islandicus pan-genome.</title>
        <authorList>
            <person name="Reno M.L."/>
            <person name="Held N.L."/>
            <person name="Fields C.J."/>
            <person name="Burke P.V."/>
            <person name="Whitaker R.J."/>
        </authorList>
    </citation>
    <scope>NUCLEOTIDE SEQUENCE [LARGE SCALE GENOMIC DNA]</scope>
    <source>
        <strain>L.S.2.15 / Lassen #1</strain>
    </source>
</reference>
<proteinExistence type="inferred from homology"/>
<name>CBIX_SACI2</name>
<feature type="chain" id="PRO_1000212925" description="Sirohydrochlorin cobaltochelatase">
    <location>
        <begin position="1"/>
        <end position="128"/>
    </location>
</feature>
<feature type="active site" description="Proton acceptor" evidence="1">
    <location>
        <position position="9"/>
    </location>
</feature>
<feature type="binding site" evidence="1">
    <location>
        <position position="9"/>
    </location>
    <ligand>
        <name>Co(2+)</name>
        <dbReference type="ChEBI" id="CHEBI:48828"/>
    </ligand>
</feature>
<feature type="binding site" evidence="1">
    <location>
        <position position="43"/>
    </location>
    <ligand>
        <name>substrate</name>
    </ligand>
</feature>
<feature type="binding site" evidence="1">
    <location>
        <begin position="68"/>
        <end position="73"/>
    </location>
    <ligand>
        <name>substrate</name>
    </ligand>
</feature>
<feature type="binding site" evidence="1">
    <location>
        <position position="73"/>
    </location>
    <ligand>
        <name>Co(2+)</name>
        <dbReference type="ChEBI" id="CHEBI:48828"/>
    </ligand>
</feature>
<sequence>MLGVLLVLHGSKIPEWKDVGIKYAEYLSRYFNLVEFGFLEFNKPTLSEALSNLLAKGANKIVVVPLLFATGTHFKRDIPRLLGIDGDEKKIQYMGKEIEIIIADPLGFDEKIGEVLVKRVNETYNKNY</sequence>
<keyword id="KW-0169">Cobalamin biosynthesis</keyword>
<keyword id="KW-0170">Cobalt</keyword>
<keyword id="KW-0456">Lyase</keyword>
<keyword id="KW-0479">Metal-binding</keyword>
<accession>C3MR05</accession>
<dbReference type="EC" id="4.99.1.3" evidence="1"/>
<dbReference type="EMBL" id="CP001399">
    <property type="protein sequence ID" value="ACP35818.1"/>
    <property type="molecule type" value="Genomic_DNA"/>
</dbReference>
<dbReference type="RefSeq" id="WP_012711674.1">
    <property type="nucleotide sequence ID" value="NC_012589.1"/>
</dbReference>
<dbReference type="SMR" id="C3MR05"/>
<dbReference type="KEGG" id="sis:LS215_1822"/>
<dbReference type="HOGENOM" id="CLU_065901_2_1_2"/>
<dbReference type="OrthoDB" id="11653at2157"/>
<dbReference type="UniPathway" id="UPA00148">
    <property type="reaction ID" value="UER00223"/>
</dbReference>
<dbReference type="Proteomes" id="UP000001747">
    <property type="component" value="Chromosome"/>
</dbReference>
<dbReference type="GO" id="GO:0050897">
    <property type="term" value="F:cobalt ion binding"/>
    <property type="evidence" value="ECO:0007669"/>
    <property type="project" value="UniProtKB-UniRule"/>
</dbReference>
<dbReference type="GO" id="GO:0016852">
    <property type="term" value="F:sirohydrochlorin cobaltochelatase activity"/>
    <property type="evidence" value="ECO:0007669"/>
    <property type="project" value="UniProtKB-UniRule"/>
</dbReference>
<dbReference type="GO" id="GO:0019251">
    <property type="term" value="P:anaerobic cobalamin biosynthetic process"/>
    <property type="evidence" value="ECO:0007669"/>
    <property type="project" value="UniProtKB-UniRule"/>
</dbReference>
<dbReference type="CDD" id="cd03416">
    <property type="entry name" value="CbiX_SirB_N"/>
    <property type="match status" value="1"/>
</dbReference>
<dbReference type="Gene3D" id="3.40.50.1400">
    <property type="match status" value="1"/>
</dbReference>
<dbReference type="HAMAP" id="MF_00785">
    <property type="entry name" value="CbiX"/>
    <property type="match status" value="1"/>
</dbReference>
<dbReference type="InterPro" id="IPR002762">
    <property type="entry name" value="CbiX-like"/>
</dbReference>
<dbReference type="InterPro" id="IPR023652">
    <property type="entry name" value="SiroHydchlorin_Cochelatase"/>
</dbReference>
<dbReference type="InterPro" id="IPR050963">
    <property type="entry name" value="Sirohydro_Cobaltochel/CbiX"/>
</dbReference>
<dbReference type="PANTHER" id="PTHR33542">
    <property type="entry name" value="SIROHYDROCHLORIN FERROCHELATASE, CHLOROPLASTIC"/>
    <property type="match status" value="1"/>
</dbReference>
<dbReference type="PANTHER" id="PTHR33542:SF3">
    <property type="entry name" value="SIROHYDROCHLORIN FERROCHELATASE, CHLOROPLASTIC"/>
    <property type="match status" value="1"/>
</dbReference>
<dbReference type="Pfam" id="PF01903">
    <property type="entry name" value="CbiX"/>
    <property type="match status" value="1"/>
</dbReference>
<dbReference type="SUPFAM" id="SSF53800">
    <property type="entry name" value="Chelatase"/>
    <property type="match status" value="1"/>
</dbReference>
<organism>
    <name type="scientific">Saccharolobus islandicus (strain L.S.2.15 / Lassen #1)</name>
    <name type="common">Sulfolobus islandicus</name>
    <dbReference type="NCBI Taxonomy" id="429572"/>
    <lineage>
        <taxon>Archaea</taxon>
        <taxon>Thermoproteota</taxon>
        <taxon>Thermoprotei</taxon>
        <taxon>Sulfolobales</taxon>
        <taxon>Sulfolobaceae</taxon>
        <taxon>Saccharolobus</taxon>
    </lineage>
</organism>
<protein>
    <recommendedName>
        <fullName evidence="1">Sirohydrochlorin cobaltochelatase</fullName>
        <ecNumber evidence="1">4.99.1.3</ecNumber>
    </recommendedName>
    <alternativeName>
        <fullName evidence="1">CbiXS</fullName>
    </alternativeName>
</protein>
<evidence type="ECO:0000255" key="1">
    <source>
        <dbReference type="HAMAP-Rule" id="MF_00785"/>
    </source>
</evidence>
<comment type="function">
    <text evidence="1">Catalyzes the insertion of Co(2+) into sirohydrochlorin as part of the anaerobic pathway to cobalamin biosynthesis.</text>
</comment>
<comment type="catalytic activity">
    <reaction evidence="1">
        <text>Co-sirohydrochlorin + 2 H(+) = sirohydrochlorin + Co(2+)</text>
        <dbReference type="Rhea" id="RHEA:15893"/>
        <dbReference type="ChEBI" id="CHEBI:15378"/>
        <dbReference type="ChEBI" id="CHEBI:48828"/>
        <dbReference type="ChEBI" id="CHEBI:58351"/>
        <dbReference type="ChEBI" id="CHEBI:60049"/>
        <dbReference type="EC" id="4.99.1.3"/>
    </reaction>
</comment>
<comment type="pathway">
    <text evidence="1">Cofactor biosynthesis; adenosylcobalamin biosynthesis; cob(II)yrinate a,c-diamide from sirohydrochlorin (anaerobic route): step 1/10.</text>
</comment>
<comment type="subunit">
    <text evidence="1">Homotetramer; dimer of dimers.</text>
</comment>
<comment type="similarity">
    <text evidence="1">Belongs to the CbiX family. CbiXS subfamily.</text>
</comment>